<gene>
    <name evidence="1" type="primary">tgt</name>
    <name type="ordered locus">SDY_0328</name>
</gene>
<organism>
    <name type="scientific">Shigella dysenteriae serotype 1 (strain Sd197)</name>
    <dbReference type="NCBI Taxonomy" id="300267"/>
    <lineage>
        <taxon>Bacteria</taxon>
        <taxon>Pseudomonadati</taxon>
        <taxon>Pseudomonadota</taxon>
        <taxon>Gammaproteobacteria</taxon>
        <taxon>Enterobacterales</taxon>
        <taxon>Enterobacteriaceae</taxon>
        <taxon>Shigella</taxon>
    </lineage>
</organism>
<name>TGT_SHIDS</name>
<sequence>MKFELDTTDGRARRGRLVFDRGVVETPCFMPVGTYGTVKGMTPEEVEATGAQIILGNTFHLWLRPGQEIMKLHGDLHDFMQWKGPILTDSGGFQVFSLGDIRKITEQGVHFRNPINGDPIFLDPEKSMEIQYDLGSDIVMIFDECTPYPADWDYAKRSMEMSLRWAKRSRERFDSLGNKNALFGIIQGSVYEDLRDISVKGLVDIGFDGYAVGGLAVGEPKADMHRILEHVCPQIPADKPRYLMGVGKPEDLVEGVRRGIDMFDCVMPTRNARNGHLFVTDGVVKIRNAKYKSDTGPLDPECDCYTCRNYSRAYLHHLDRCNEILGARLNTIHNLRYYQRLMAGLRKAIEEGKLESFVTDFYQRQGREVPPLNVD</sequence>
<accession>Q32JG0</accession>
<protein>
    <recommendedName>
        <fullName evidence="1">Queuine tRNA-ribosyltransferase</fullName>
        <ecNumber evidence="1">2.4.2.29</ecNumber>
    </recommendedName>
    <alternativeName>
        <fullName evidence="1">Guanine insertion enzyme</fullName>
    </alternativeName>
    <alternativeName>
        <fullName evidence="1">tRNA-guanine transglycosylase</fullName>
    </alternativeName>
</protein>
<feature type="chain" id="PRO_1000016855" description="Queuine tRNA-ribosyltransferase">
    <location>
        <begin position="1"/>
        <end position="375"/>
    </location>
</feature>
<feature type="region of interest" description="RNA binding" evidence="1">
    <location>
        <begin position="245"/>
        <end position="251"/>
    </location>
</feature>
<feature type="region of interest" description="RNA binding; important for wobble base 34 recognition" evidence="1">
    <location>
        <begin position="269"/>
        <end position="273"/>
    </location>
</feature>
<feature type="active site" description="Proton acceptor" evidence="1">
    <location>
        <position position="89"/>
    </location>
</feature>
<feature type="active site" description="Nucleophile" evidence="1">
    <location>
        <position position="264"/>
    </location>
</feature>
<feature type="binding site" evidence="1">
    <location>
        <begin position="89"/>
        <end position="93"/>
    </location>
    <ligand>
        <name>substrate</name>
    </ligand>
</feature>
<feature type="binding site" evidence="1">
    <location>
        <position position="143"/>
    </location>
    <ligand>
        <name>substrate</name>
    </ligand>
</feature>
<feature type="binding site" evidence="1">
    <location>
        <position position="187"/>
    </location>
    <ligand>
        <name>substrate</name>
    </ligand>
</feature>
<feature type="binding site" evidence="1">
    <location>
        <position position="214"/>
    </location>
    <ligand>
        <name>substrate</name>
    </ligand>
</feature>
<feature type="binding site" evidence="1">
    <location>
        <position position="302"/>
    </location>
    <ligand>
        <name>Zn(2+)</name>
        <dbReference type="ChEBI" id="CHEBI:29105"/>
    </ligand>
</feature>
<feature type="binding site" evidence="1">
    <location>
        <position position="304"/>
    </location>
    <ligand>
        <name>Zn(2+)</name>
        <dbReference type="ChEBI" id="CHEBI:29105"/>
    </ligand>
</feature>
<feature type="binding site" evidence="1">
    <location>
        <position position="307"/>
    </location>
    <ligand>
        <name>Zn(2+)</name>
        <dbReference type="ChEBI" id="CHEBI:29105"/>
    </ligand>
</feature>
<feature type="binding site" evidence="1">
    <location>
        <position position="333"/>
    </location>
    <ligand>
        <name>Zn(2+)</name>
        <dbReference type="ChEBI" id="CHEBI:29105"/>
    </ligand>
</feature>
<proteinExistence type="inferred from homology"/>
<keyword id="KW-0328">Glycosyltransferase</keyword>
<keyword id="KW-0479">Metal-binding</keyword>
<keyword id="KW-0671">Queuosine biosynthesis</keyword>
<keyword id="KW-1185">Reference proteome</keyword>
<keyword id="KW-0808">Transferase</keyword>
<keyword id="KW-0819">tRNA processing</keyword>
<keyword id="KW-0862">Zinc</keyword>
<evidence type="ECO:0000255" key="1">
    <source>
        <dbReference type="HAMAP-Rule" id="MF_00168"/>
    </source>
</evidence>
<reference key="1">
    <citation type="journal article" date="2005" name="Nucleic Acids Res.">
        <title>Genome dynamics and diversity of Shigella species, the etiologic agents of bacillary dysentery.</title>
        <authorList>
            <person name="Yang F."/>
            <person name="Yang J."/>
            <person name="Zhang X."/>
            <person name="Chen L."/>
            <person name="Jiang Y."/>
            <person name="Yan Y."/>
            <person name="Tang X."/>
            <person name="Wang J."/>
            <person name="Xiong Z."/>
            <person name="Dong J."/>
            <person name="Xue Y."/>
            <person name="Zhu Y."/>
            <person name="Xu X."/>
            <person name="Sun L."/>
            <person name="Chen S."/>
            <person name="Nie H."/>
            <person name="Peng J."/>
            <person name="Xu J."/>
            <person name="Wang Y."/>
            <person name="Yuan Z."/>
            <person name="Wen Y."/>
            <person name="Yao Z."/>
            <person name="Shen Y."/>
            <person name="Qiang B."/>
            <person name="Hou Y."/>
            <person name="Yu J."/>
            <person name="Jin Q."/>
        </authorList>
    </citation>
    <scope>NUCLEOTIDE SEQUENCE [LARGE SCALE GENOMIC DNA]</scope>
    <source>
        <strain>Sd197</strain>
    </source>
</reference>
<dbReference type="EC" id="2.4.2.29" evidence="1"/>
<dbReference type="EMBL" id="CP000034">
    <property type="protein sequence ID" value="ABB60547.1"/>
    <property type="molecule type" value="Genomic_DNA"/>
</dbReference>
<dbReference type="RefSeq" id="WP_000667319.1">
    <property type="nucleotide sequence ID" value="NC_007606.1"/>
</dbReference>
<dbReference type="RefSeq" id="YP_402036.1">
    <property type="nucleotide sequence ID" value="NC_007606.1"/>
</dbReference>
<dbReference type="SMR" id="Q32JG0"/>
<dbReference type="STRING" id="300267.SDY_0328"/>
<dbReference type="EnsemblBacteria" id="ABB60547">
    <property type="protein sequence ID" value="ABB60547"/>
    <property type="gene ID" value="SDY_0328"/>
</dbReference>
<dbReference type="GeneID" id="93777054"/>
<dbReference type="KEGG" id="sdy:SDY_0328"/>
<dbReference type="PATRIC" id="fig|300267.13.peg.377"/>
<dbReference type="HOGENOM" id="CLU_022060_0_1_6"/>
<dbReference type="UniPathway" id="UPA00392"/>
<dbReference type="Proteomes" id="UP000002716">
    <property type="component" value="Chromosome"/>
</dbReference>
<dbReference type="GO" id="GO:0005829">
    <property type="term" value="C:cytosol"/>
    <property type="evidence" value="ECO:0007669"/>
    <property type="project" value="TreeGrafter"/>
</dbReference>
<dbReference type="GO" id="GO:0046872">
    <property type="term" value="F:metal ion binding"/>
    <property type="evidence" value="ECO:0007669"/>
    <property type="project" value="UniProtKB-KW"/>
</dbReference>
<dbReference type="GO" id="GO:0008479">
    <property type="term" value="F:tRNA-guanosine(34) queuine transglycosylase activity"/>
    <property type="evidence" value="ECO:0007669"/>
    <property type="project" value="UniProtKB-UniRule"/>
</dbReference>
<dbReference type="GO" id="GO:0008616">
    <property type="term" value="P:queuosine biosynthetic process"/>
    <property type="evidence" value="ECO:0007669"/>
    <property type="project" value="UniProtKB-UniRule"/>
</dbReference>
<dbReference type="GO" id="GO:0002099">
    <property type="term" value="P:tRNA wobble guanine modification"/>
    <property type="evidence" value="ECO:0007669"/>
    <property type="project" value="TreeGrafter"/>
</dbReference>
<dbReference type="GO" id="GO:0101030">
    <property type="term" value="P:tRNA-guanine transglycosylation"/>
    <property type="evidence" value="ECO:0007669"/>
    <property type="project" value="InterPro"/>
</dbReference>
<dbReference type="FunFam" id="3.20.20.105:FF:000001">
    <property type="entry name" value="Queuine tRNA-ribosyltransferase"/>
    <property type="match status" value="1"/>
</dbReference>
<dbReference type="Gene3D" id="3.20.20.105">
    <property type="entry name" value="Queuine tRNA-ribosyltransferase-like"/>
    <property type="match status" value="1"/>
</dbReference>
<dbReference type="HAMAP" id="MF_00168">
    <property type="entry name" value="Q_tRNA_Tgt"/>
    <property type="match status" value="1"/>
</dbReference>
<dbReference type="InterPro" id="IPR050076">
    <property type="entry name" value="ArchSynthase1/Queuine_TRR"/>
</dbReference>
<dbReference type="InterPro" id="IPR004803">
    <property type="entry name" value="TGT"/>
</dbReference>
<dbReference type="InterPro" id="IPR036511">
    <property type="entry name" value="TGT-like_sf"/>
</dbReference>
<dbReference type="InterPro" id="IPR002616">
    <property type="entry name" value="tRNA_ribo_trans-like"/>
</dbReference>
<dbReference type="NCBIfam" id="TIGR00430">
    <property type="entry name" value="Q_tRNA_tgt"/>
    <property type="match status" value="1"/>
</dbReference>
<dbReference type="NCBIfam" id="TIGR00449">
    <property type="entry name" value="tgt_general"/>
    <property type="match status" value="1"/>
</dbReference>
<dbReference type="PANTHER" id="PTHR46499">
    <property type="entry name" value="QUEUINE TRNA-RIBOSYLTRANSFERASE"/>
    <property type="match status" value="1"/>
</dbReference>
<dbReference type="PANTHER" id="PTHR46499:SF1">
    <property type="entry name" value="QUEUINE TRNA-RIBOSYLTRANSFERASE"/>
    <property type="match status" value="1"/>
</dbReference>
<dbReference type="Pfam" id="PF01702">
    <property type="entry name" value="TGT"/>
    <property type="match status" value="1"/>
</dbReference>
<dbReference type="SUPFAM" id="SSF51713">
    <property type="entry name" value="tRNA-guanine transglycosylase"/>
    <property type="match status" value="1"/>
</dbReference>
<comment type="function">
    <text evidence="1">Catalyzes the base-exchange of a guanine (G) residue with the queuine precursor 7-aminomethyl-7-deazaguanine (PreQ1) at position 34 (anticodon wobble position) in tRNAs with GU(N) anticodons (tRNA-Asp, -Asn, -His and -Tyr). Catalysis occurs through a double-displacement mechanism. The nucleophile active site attacks the C1' of nucleotide 34 to detach the guanine base from the RNA, forming a covalent enzyme-RNA intermediate. The proton acceptor active site deprotonates the incoming PreQ1, allowing a nucleophilic attack on the C1' of the ribose to form the product. After dissociation, two additional enzymatic reactions on the tRNA convert PreQ1 to queuine (Q), resulting in the hypermodified nucleoside queuosine (7-(((4,5-cis-dihydroxy-2-cyclopenten-1-yl)amino)methyl)-7-deazaguanosine).</text>
</comment>
<comment type="catalytic activity">
    <reaction evidence="1">
        <text>7-aminomethyl-7-carbaguanine + guanosine(34) in tRNA = 7-aminomethyl-7-carbaguanosine(34) in tRNA + guanine</text>
        <dbReference type="Rhea" id="RHEA:24104"/>
        <dbReference type="Rhea" id="RHEA-COMP:10341"/>
        <dbReference type="Rhea" id="RHEA-COMP:10342"/>
        <dbReference type="ChEBI" id="CHEBI:16235"/>
        <dbReference type="ChEBI" id="CHEBI:58703"/>
        <dbReference type="ChEBI" id="CHEBI:74269"/>
        <dbReference type="ChEBI" id="CHEBI:82833"/>
        <dbReference type="EC" id="2.4.2.29"/>
    </reaction>
</comment>
<comment type="cofactor">
    <cofactor evidence="1">
        <name>Zn(2+)</name>
        <dbReference type="ChEBI" id="CHEBI:29105"/>
    </cofactor>
    <text evidence="1">Binds 1 zinc ion per subunit.</text>
</comment>
<comment type="pathway">
    <text evidence="1">tRNA modification; tRNA-queuosine biosynthesis.</text>
</comment>
<comment type="subunit">
    <text evidence="1">Homodimer. Within each dimer, one monomer is responsible for RNA recognition and catalysis, while the other monomer binds to the replacement base PreQ1.</text>
</comment>
<comment type="similarity">
    <text evidence="1">Belongs to the queuine tRNA-ribosyltransferase family.</text>
</comment>